<name>RNC_FRATH</name>
<dbReference type="EC" id="3.1.26.3" evidence="1"/>
<dbReference type="EMBL" id="AM233362">
    <property type="protein sequence ID" value="CAJ78994.1"/>
    <property type="molecule type" value="Genomic_DNA"/>
</dbReference>
<dbReference type="RefSeq" id="WP_003014910.1">
    <property type="nucleotide sequence ID" value="NZ_CP009694.1"/>
</dbReference>
<dbReference type="SMR" id="Q2A4N2"/>
<dbReference type="KEGG" id="ftl:FTL_0554"/>
<dbReference type="Proteomes" id="UP000001944">
    <property type="component" value="Chromosome"/>
</dbReference>
<dbReference type="GO" id="GO:0005737">
    <property type="term" value="C:cytoplasm"/>
    <property type="evidence" value="ECO:0007669"/>
    <property type="project" value="UniProtKB-SubCell"/>
</dbReference>
<dbReference type="GO" id="GO:0003725">
    <property type="term" value="F:double-stranded RNA binding"/>
    <property type="evidence" value="ECO:0007669"/>
    <property type="project" value="TreeGrafter"/>
</dbReference>
<dbReference type="GO" id="GO:0046872">
    <property type="term" value="F:metal ion binding"/>
    <property type="evidence" value="ECO:0007669"/>
    <property type="project" value="UniProtKB-KW"/>
</dbReference>
<dbReference type="GO" id="GO:0004525">
    <property type="term" value="F:ribonuclease III activity"/>
    <property type="evidence" value="ECO:0007669"/>
    <property type="project" value="UniProtKB-UniRule"/>
</dbReference>
<dbReference type="GO" id="GO:0019843">
    <property type="term" value="F:rRNA binding"/>
    <property type="evidence" value="ECO:0007669"/>
    <property type="project" value="UniProtKB-KW"/>
</dbReference>
<dbReference type="GO" id="GO:0006397">
    <property type="term" value="P:mRNA processing"/>
    <property type="evidence" value="ECO:0007669"/>
    <property type="project" value="UniProtKB-UniRule"/>
</dbReference>
<dbReference type="GO" id="GO:0010468">
    <property type="term" value="P:regulation of gene expression"/>
    <property type="evidence" value="ECO:0007669"/>
    <property type="project" value="TreeGrafter"/>
</dbReference>
<dbReference type="GO" id="GO:0006364">
    <property type="term" value="P:rRNA processing"/>
    <property type="evidence" value="ECO:0007669"/>
    <property type="project" value="UniProtKB-UniRule"/>
</dbReference>
<dbReference type="GO" id="GO:0008033">
    <property type="term" value="P:tRNA processing"/>
    <property type="evidence" value="ECO:0007669"/>
    <property type="project" value="UniProtKB-KW"/>
</dbReference>
<dbReference type="CDD" id="cd10845">
    <property type="entry name" value="DSRM_RNAse_III_family"/>
    <property type="match status" value="1"/>
</dbReference>
<dbReference type="CDD" id="cd00593">
    <property type="entry name" value="RIBOc"/>
    <property type="match status" value="1"/>
</dbReference>
<dbReference type="FunFam" id="1.10.1520.10:FF:000001">
    <property type="entry name" value="Ribonuclease 3"/>
    <property type="match status" value="1"/>
</dbReference>
<dbReference type="Gene3D" id="3.30.160.20">
    <property type="match status" value="1"/>
</dbReference>
<dbReference type="Gene3D" id="1.10.1520.10">
    <property type="entry name" value="Ribonuclease III domain"/>
    <property type="match status" value="1"/>
</dbReference>
<dbReference type="HAMAP" id="MF_00104">
    <property type="entry name" value="RNase_III"/>
    <property type="match status" value="1"/>
</dbReference>
<dbReference type="InterPro" id="IPR014720">
    <property type="entry name" value="dsRBD_dom"/>
</dbReference>
<dbReference type="InterPro" id="IPR011907">
    <property type="entry name" value="RNase_III"/>
</dbReference>
<dbReference type="InterPro" id="IPR000999">
    <property type="entry name" value="RNase_III_dom"/>
</dbReference>
<dbReference type="InterPro" id="IPR036389">
    <property type="entry name" value="RNase_III_sf"/>
</dbReference>
<dbReference type="NCBIfam" id="TIGR02191">
    <property type="entry name" value="RNaseIII"/>
    <property type="match status" value="1"/>
</dbReference>
<dbReference type="PANTHER" id="PTHR11207:SF0">
    <property type="entry name" value="RIBONUCLEASE 3"/>
    <property type="match status" value="1"/>
</dbReference>
<dbReference type="PANTHER" id="PTHR11207">
    <property type="entry name" value="RIBONUCLEASE III"/>
    <property type="match status" value="1"/>
</dbReference>
<dbReference type="Pfam" id="PF00035">
    <property type="entry name" value="dsrm"/>
    <property type="match status" value="1"/>
</dbReference>
<dbReference type="Pfam" id="PF14622">
    <property type="entry name" value="Ribonucleas_3_3"/>
    <property type="match status" value="1"/>
</dbReference>
<dbReference type="SMART" id="SM00358">
    <property type="entry name" value="DSRM"/>
    <property type="match status" value="1"/>
</dbReference>
<dbReference type="SMART" id="SM00535">
    <property type="entry name" value="RIBOc"/>
    <property type="match status" value="1"/>
</dbReference>
<dbReference type="SUPFAM" id="SSF54768">
    <property type="entry name" value="dsRNA-binding domain-like"/>
    <property type="match status" value="1"/>
</dbReference>
<dbReference type="SUPFAM" id="SSF69065">
    <property type="entry name" value="RNase III domain-like"/>
    <property type="match status" value="1"/>
</dbReference>
<dbReference type="PROSITE" id="PS50137">
    <property type="entry name" value="DS_RBD"/>
    <property type="match status" value="1"/>
</dbReference>
<dbReference type="PROSITE" id="PS00517">
    <property type="entry name" value="RNASE_3_1"/>
    <property type="match status" value="1"/>
</dbReference>
<dbReference type="PROSITE" id="PS50142">
    <property type="entry name" value="RNASE_3_2"/>
    <property type="match status" value="1"/>
</dbReference>
<accession>Q2A4N2</accession>
<gene>
    <name evidence="1" type="primary">rnc</name>
    <name type="ordered locus">FTL_0554</name>
</gene>
<feature type="chain" id="PRO_1000075756" description="Ribonuclease 3">
    <location>
        <begin position="1"/>
        <end position="230"/>
    </location>
</feature>
<feature type="domain" description="RNase III" evidence="1">
    <location>
        <begin position="5"/>
        <end position="125"/>
    </location>
</feature>
<feature type="domain" description="DRBM" evidence="1">
    <location>
        <begin position="153"/>
        <end position="223"/>
    </location>
</feature>
<feature type="active site" evidence="1">
    <location>
        <position position="44"/>
    </location>
</feature>
<feature type="active site" evidence="1">
    <location>
        <position position="114"/>
    </location>
</feature>
<feature type="binding site" evidence="1">
    <location>
        <position position="40"/>
    </location>
    <ligand>
        <name>Mg(2+)</name>
        <dbReference type="ChEBI" id="CHEBI:18420"/>
    </ligand>
</feature>
<feature type="binding site" evidence="1">
    <location>
        <position position="111"/>
    </location>
    <ligand>
        <name>Mg(2+)</name>
        <dbReference type="ChEBI" id="CHEBI:18420"/>
    </ligand>
</feature>
<feature type="binding site" evidence="1">
    <location>
        <position position="114"/>
    </location>
    <ligand>
        <name>Mg(2+)</name>
        <dbReference type="ChEBI" id="CHEBI:18420"/>
    </ligand>
</feature>
<protein>
    <recommendedName>
        <fullName evidence="1">Ribonuclease 3</fullName>
        <ecNumber evidence="1">3.1.26.3</ecNumber>
    </recommendedName>
    <alternativeName>
        <fullName evidence="1">Ribonuclease III</fullName>
        <shortName evidence="1">RNase III</shortName>
    </alternativeName>
</protein>
<keyword id="KW-0963">Cytoplasm</keyword>
<keyword id="KW-0255">Endonuclease</keyword>
<keyword id="KW-0378">Hydrolase</keyword>
<keyword id="KW-0460">Magnesium</keyword>
<keyword id="KW-0479">Metal-binding</keyword>
<keyword id="KW-0507">mRNA processing</keyword>
<keyword id="KW-0540">Nuclease</keyword>
<keyword id="KW-1185">Reference proteome</keyword>
<keyword id="KW-0694">RNA-binding</keyword>
<keyword id="KW-0698">rRNA processing</keyword>
<keyword id="KW-0699">rRNA-binding</keyword>
<keyword id="KW-0819">tRNA processing</keyword>
<sequence>MVPEYSRFYNILGYNFKDYTLLIRALTHRSKTKKNYERLEFLGDSVLSFVIAEVLYKQFTDLAEGKLSQLRSKLVKGTTLAQLASSLKMDEYIILGASEQGGHKREKILEDVFEAVIGAIYLDSDFATVKKVILKWYQPIISSINLDTIKVKDSKSKLQEILLQNALSLPEYSIETIDGKDHEQQFTVVAVSKDLNLRVKAQGTSRKKAEQKTAEKMIEMLSQQGLHEKK</sequence>
<organism>
    <name type="scientific">Francisella tularensis subsp. holarctica (strain LVS)</name>
    <dbReference type="NCBI Taxonomy" id="376619"/>
    <lineage>
        <taxon>Bacteria</taxon>
        <taxon>Pseudomonadati</taxon>
        <taxon>Pseudomonadota</taxon>
        <taxon>Gammaproteobacteria</taxon>
        <taxon>Thiotrichales</taxon>
        <taxon>Francisellaceae</taxon>
        <taxon>Francisella</taxon>
    </lineage>
</organism>
<proteinExistence type="inferred from homology"/>
<evidence type="ECO:0000255" key="1">
    <source>
        <dbReference type="HAMAP-Rule" id="MF_00104"/>
    </source>
</evidence>
<reference key="1">
    <citation type="submission" date="2006-03" db="EMBL/GenBank/DDBJ databases">
        <title>Complete genome sequence of Francisella tularensis LVS (Live Vaccine Strain).</title>
        <authorList>
            <person name="Chain P."/>
            <person name="Larimer F."/>
            <person name="Land M."/>
            <person name="Stilwagen S."/>
            <person name="Larsson P."/>
            <person name="Bearden S."/>
            <person name="Chu M."/>
            <person name="Oyston P."/>
            <person name="Forsman M."/>
            <person name="Andersson S."/>
            <person name="Lindler L."/>
            <person name="Titball R."/>
            <person name="Garcia E."/>
        </authorList>
    </citation>
    <scope>NUCLEOTIDE SEQUENCE [LARGE SCALE GENOMIC DNA]</scope>
    <source>
        <strain>LVS</strain>
    </source>
</reference>
<comment type="function">
    <text evidence="1">Digests double-stranded RNA. Involved in the processing of primary rRNA transcript to yield the immediate precursors to the large and small rRNAs (23S and 16S). Processes some mRNAs, and tRNAs when they are encoded in the rRNA operon. Processes pre-crRNA and tracrRNA of type II CRISPR loci if present in the organism.</text>
</comment>
<comment type="catalytic activity">
    <reaction evidence="1">
        <text>Endonucleolytic cleavage to 5'-phosphomonoester.</text>
        <dbReference type="EC" id="3.1.26.3"/>
    </reaction>
</comment>
<comment type="cofactor">
    <cofactor evidence="1">
        <name>Mg(2+)</name>
        <dbReference type="ChEBI" id="CHEBI:18420"/>
    </cofactor>
</comment>
<comment type="subunit">
    <text evidence="1">Homodimer.</text>
</comment>
<comment type="subcellular location">
    <subcellularLocation>
        <location evidence="1">Cytoplasm</location>
    </subcellularLocation>
</comment>
<comment type="similarity">
    <text evidence="1">Belongs to the ribonuclease III family.</text>
</comment>